<proteinExistence type="inferred from homology"/>
<reference key="1">
    <citation type="journal article" date="2001" name="DNA Res.">
        <title>Complete genome sequence of an aerobic thermoacidophilic Crenarchaeon, Sulfolobus tokodaii strain7.</title>
        <authorList>
            <person name="Kawarabayasi Y."/>
            <person name="Hino Y."/>
            <person name="Horikawa H."/>
            <person name="Jin-no K."/>
            <person name="Takahashi M."/>
            <person name="Sekine M."/>
            <person name="Baba S."/>
            <person name="Ankai A."/>
            <person name="Kosugi H."/>
            <person name="Hosoyama A."/>
            <person name="Fukui S."/>
            <person name="Nagai Y."/>
            <person name="Nishijima K."/>
            <person name="Otsuka R."/>
            <person name="Nakazawa H."/>
            <person name="Takamiya M."/>
            <person name="Kato Y."/>
            <person name="Yoshizawa T."/>
            <person name="Tanaka T."/>
            <person name="Kudoh Y."/>
            <person name="Yamazaki J."/>
            <person name="Kushida N."/>
            <person name="Oguchi A."/>
            <person name="Aoki K."/>
            <person name="Masuda S."/>
            <person name="Yanagii M."/>
            <person name="Nishimura M."/>
            <person name="Yamagishi A."/>
            <person name="Oshima T."/>
            <person name="Kikuchi H."/>
        </authorList>
    </citation>
    <scope>NUCLEOTIDE SEQUENCE [LARGE SCALE GENOMIC DNA]</scope>
    <source>
        <strain>DSM 16993 / JCM 10545 / NBRC 100140 / 7</strain>
    </source>
</reference>
<comment type="function">
    <text evidence="1">Part of ribonuclease P, a protein complex that generates mature tRNA molecules by cleaving their 5'-ends.</text>
</comment>
<comment type="catalytic activity">
    <reaction evidence="1">
        <text>Endonucleolytic cleavage of RNA, removing 5'-extranucleotides from tRNA precursor.</text>
        <dbReference type="EC" id="3.1.26.5"/>
    </reaction>
</comment>
<comment type="subunit">
    <text evidence="1">Consists of a catalytic RNA component and at least 4-5 protein subunits.</text>
</comment>
<comment type="subcellular location">
    <subcellularLocation>
        <location evidence="1">Cytoplasm</location>
    </subcellularLocation>
</comment>
<comment type="similarity">
    <text evidence="1">Belongs to the eukaryotic/archaeal RNase P protein component 1 family.</text>
</comment>
<accession>P60834</accession>
<accession>F9VMX9</accession>
<dbReference type="EC" id="3.1.26.5" evidence="1"/>
<dbReference type="EMBL" id="BA000023">
    <property type="protein sequence ID" value="BAK54276.1"/>
    <property type="molecule type" value="Genomic_DNA"/>
</dbReference>
<dbReference type="RefSeq" id="WP_052846311.1">
    <property type="nucleotide sequence ID" value="NC_003106.2"/>
</dbReference>
<dbReference type="SMR" id="P60834"/>
<dbReference type="STRING" id="273063.STK_04234"/>
<dbReference type="GeneID" id="25400204"/>
<dbReference type="KEGG" id="sto:STK_04234"/>
<dbReference type="PATRIC" id="fig|273063.9.peg.492"/>
<dbReference type="eggNOG" id="arCOG00784">
    <property type="taxonomic scope" value="Archaea"/>
</dbReference>
<dbReference type="OrthoDB" id="39019at2157"/>
<dbReference type="Proteomes" id="UP000001015">
    <property type="component" value="Chromosome"/>
</dbReference>
<dbReference type="GO" id="GO:0005737">
    <property type="term" value="C:cytoplasm"/>
    <property type="evidence" value="ECO:0007669"/>
    <property type="project" value="UniProtKB-SubCell"/>
</dbReference>
<dbReference type="GO" id="GO:0030677">
    <property type="term" value="C:ribonuclease P complex"/>
    <property type="evidence" value="ECO:0007669"/>
    <property type="project" value="UniProtKB-UniRule"/>
</dbReference>
<dbReference type="GO" id="GO:0004526">
    <property type="term" value="F:ribonuclease P activity"/>
    <property type="evidence" value="ECO:0007669"/>
    <property type="project" value="UniProtKB-UniRule"/>
</dbReference>
<dbReference type="GO" id="GO:0003723">
    <property type="term" value="F:RNA binding"/>
    <property type="evidence" value="ECO:0007669"/>
    <property type="project" value="InterPro"/>
</dbReference>
<dbReference type="GO" id="GO:0001682">
    <property type="term" value="P:tRNA 5'-leader removal"/>
    <property type="evidence" value="ECO:0007669"/>
    <property type="project" value="UniProtKB-UniRule"/>
</dbReference>
<dbReference type="Gene3D" id="2.30.30.210">
    <property type="entry name" value="Ribonuclease P/MRP, subunit p29"/>
    <property type="match status" value="1"/>
</dbReference>
<dbReference type="HAMAP" id="MF_00754">
    <property type="entry name" value="RNase_P_1"/>
    <property type="match status" value="1"/>
</dbReference>
<dbReference type="InterPro" id="IPR036980">
    <property type="entry name" value="RNase_P/MRP_Rpp29_sf"/>
</dbReference>
<dbReference type="InterPro" id="IPR023538">
    <property type="entry name" value="RNP1"/>
</dbReference>
<dbReference type="InterPro" id="IPR023534">
    <property type="entry name" value="Rof/RNase_P-like"/>
</dbReference>
<dbReference type="InterPro" id="IPR002730">
    <property type="entry name" value="Rpp29/RNP1"/>
</dbReference>
<dbReference type="Pfam" id="PF01868">
    <property type="entry name" value="RNase_P-MRP_p29"/>
    <property type="match status" value="1"/>
</dbReference>
<dbReference type="SMART" id="SM00538">
    <property type="entry name" value="POP4"/>
    <property type="match status" value="1"/>
</dbReference>
<dbReference type="SUPFAM" id="SSF101744">
    <property type="entry name" value="Rof/RNase P subunit-like"/>
    <property type="match status" value="1"/>
</dbReference>
<protein>
    <recommendedName>
        <fullName evidence="1">Ribonuclease P protein component 1</fullName>
        <shortName evidence="1">RNase P component 1</shortName>
        <ecNumber evidence="1">3.1.26.5</ecNumber>
    </recommendedName>
    <alternativeName>
        <fullName evidence="1">Rpp29</fullName>
    </alternativeName>
</protein>
<feature type="chain" id="PRO_0000128440" description="Ribonuclease P protein component 1">
    <location>
        <begin position="1"/>
        <end position="77"/>
    </location>
</feature>
<keyword id="KW-0963">Cytoplasm</keyword>
<keyword id="KW-0255">Endonuclease</keyword>
<keyword id="KW-0378">Hydrolase</keyword>
<keyword id="KW-0540">Nuclease</keyword>
<keyword id="KW-1185">Reference proteome</keyword>
<keyword id="KW-0819">tRNA processing</keyword>
<gene>
    <name evidence="1" type="primary">rnp1</name>
    <name type="synonym">rpp29</name>
    <name type="ordered locus">STK_04234</name>
</gene>
<evidence type="ECO:0000255" key="1">
    <source>
        <dbReference type="HAMAP-Rule" id="MF_00754"/>
    </source>
</evidence>
<organism>
    <name type="scientific">Sulfurisphaera tokodaii (strain DSM 16993 / JCM 10545 / NBRC 100140 / 7)</name>
    <name type="common">Sulfolobus tokodaii</name>
    <dbReference type="NCBI Taxonomy" id="273063"/>
    <lineage>
        <taxon>Archaea</taxon>
        <taxon>Thermoproteota</taxon>
        <taxon>Thermoprotei</taxon>
        <taxon>Sulfolobales</taxon>
        <taxon>Sulfolobaceae</taxon>
        <taxon>Sulfurisphaera</taxon>
    </lineage>
</organism>
<sequence>MIDLIGSKIKVLGHSDPSLIGREGIILFETKKTFLIQTQNKIIRVLKSNGIFEIYSENRKVILPGSKLVGRIEKRWL</sequence>
<name>RNP1_SULTO</name>